<keyword id="KW-0119">Carbohydrate metabolism</keyword>
<keyword id="KW-0136">Cellulose degradation</keyword>
<keyword id="KW-0186">Copper</keyword>
<keyword id="KW-1015">Disulfide bond</keyword>
<keyword id="KW-0479">Metal-binding</keyword>
<keyword id="KW-0503">Monooxygenase</keyword>
<keyword id="KW-0560">Oxidoreductase</keyword>
<keyword id="KW-0597">Phosphoprotein</keyword>
<keyword id="KW-0624">Polysaccharide degradation</keyword>
<keyword id="KW-1185">Reference proteome</keyword>
<keyword id="KW-0964">Secreted</keyword>
<keyword id="KW-0732">Signal</keyword>
<dbReference type="EC" id="1.14.99.56" evidence="5"/>
<dbReference type="EMBL" id="KZ084094">
    <property type="protein sequence ID" value="OSD05161.1"/>
    <property type="molecule type" value="Genomic_DNA"/>
</dbReference>
<dbReference type="SMR" id="A0A1Y2IY60"/>
<dbReference type="STRING" id="1353009.A0A1Y2IY60"/>
<dbReference type="OrthoDB" id="3238762at2759"/>
<dbReference type="Proteomes" id="UP000193067">
    <property type="component" value="Unassembled WGS sequence"/>
</dbReference>
<dbReference type="GO" id="GO:0005576">
    <property type="term" value="C:extracellular region"/>
    <property type="evidence" value="ECO:0007669"/>
    <property type="project" value="UniProtKB-SubCell"/>
</dbReference>
<dbReference type="GO" id="GO:0046872">
    <property type="term" value="F:metal ion binding"/>
    <property type="evidence" value="ECO:0007669"/>
    <property type="project" value="UniProtKB-KW"/>
</dbReference>
<dbReference type="GO" id="GO:0004497">
    <property type="term" value="F:monooxygenase activity"/>
    <property type="evidence" value="ECO:0007669"/>
    <property type="project" value="UniProtKB-KW"/>
</dbReference>
<dbReference type="GO" id="GO:0030245">
    <property type="term" value="P:cellulose catabolic process"/>
    <property type="evidence" value="ECO:0007669"/>
    <property type="project" value="UniProtKB-KW"/>
</dbReference>
<dbReference type="CDD" id="cd21175">
    <property type="entry name" value="LPMO_AA9"/>
    <property type="match status" value="1"/>
</dbReference>
<dbReference type="Gene3D" id="2.70.50.70">
    <property type="match status" value="1"/>
</dbReference>
<dbReference type="InterPro" id="IPR049892">
    <property type="entry name" value="AA9"/>
</dbReference>
<dbReference type="InterPro" id="IPR005103">
    <property type="entry name" value="AA9_LPMO"/>
</dbReference>
<dbReference type="PANTHER" id="PTHR33353:SF9">
    <property type="entry name" value="ENDOGLUCANASE II"/>
    <property type="match status" value="1"/>
</dbReference>
<dbReference type="PANTHER" id="PTHR33353">
    <property type="entry name" value="PUTATIVE (AFU_ORTHOLOGUE AFUA_1G12560)-RELATED"/>
    <property type="match status" value="1"/>
</dbReference>
<dbReference type="Pfam" id="PF03443">
    <property type="entry name" value="AA9"/>
    <property type="match status" value="1"/>
</dbReference>
<reference key="1">
    <citation type="journal article" date="2015" name="Biotechnol. Biofuels">
        <title>Enhanced degradation of softwood versus hardwood by the white-rot fungus Pycnoporus coccineus.</title>
        <authorList>
            <person name="Couturier M."/>
            <person name="Navarro D."/>
            <person name="Chevret D."/>
            <person name="Henrissat B."/>
            <person name="Piumi F."/>
            <person name="Ruiz-Duenas F.J."/>
            <person name="Martinez A.T."/>
            <person name="Grigoriev I.V."/>
            <person name="Riley R."/>
            <person name="Lipzen A."/>
            <person name="Berrin J.-G."/>
            <person name="Master E.R."/>
            <person name="Rosso M.-N."/>
        </authorList>
    </citation>
    <scope>NUCLEOTIDE SEQUENCE [LARGE SCALE GENOMIC DNA]</scope>
    <source>
        <strain>BRFM310</strain>
    </source>
</reference>
<reference key="2">
    <citation type="journal article" date="2023" name="Sci. Rep.">
        <title>Insights into peculiar fungal LPMO family members holding a short C-terminal sequence reminiscent of phosphate binding motifs.</title>
        <authorList>
            <person name="Reyre J.L."/>
            <person name="Grisel S."/>
            <person name="Haon M."/>
            <person name="Xiang R."/>
            <person name="Gaillard J.C."/>
            <person name="Armengaud J."/>
            <person name="Guallar V."/>
            <person name="Margeot A."/>
            <person name="Arragain S."/>
            <person name="Berrin J.G."/>
            <person name="Bissaro B."/>
        </authorList>
    </citation>
    <scope>FUNCTION</scope>
    <scope>CATALYTIC ACTIVITY</scope>
    <scope>DOMAIN</scope>
    <scope>PHOSPHORYLATION AT THR-20; SER-43; SER-49; THR-50; SER-58 AND SER-130</scope>
    <scope>MUTAGENESIS OF THR-20</scope>
</reference>
<evidence type="ECO:0000250" key="1">
    <source>
        <dbReference type="UniProtKB" id="A0A482A9N4"/>
    </source>
</evidence>
<evidence type="ECO:0000250" key="2">
    <source>
        <dbReference type="UniProtKB" id="Q1K8B6"/>
    </source>
</evidence>
<evidence type="ECO:0000250" key="3">
    <source>
        <dbReference type="UniProtKB" id="Q4WP32"/>
    </source>
</evidence>
<evidence type="ECO:0000255" key="4"/>
<evidence type="ECO:0000269" key="5">
    <source>
    </source>
</evidence>
<evidence type="ECO:0000303" key="6">
    <source>
    </source>
</evidence>
<evidence type="ECO:0000305" key="7"/>
<evidence type="ECO:0000305" key="8">
    <source>
    </source>
</evidence>
<proteinExistence type="evidence at protein level"/>
<accession>A0A1Y2IY60</accession>
<organism>
    <name type="scientific">Trametes coccinea (strain BRFM310)</name>
    <name type="common">Pycnoporus coccineus</name>
    <dbReference type="NCBI Taxonomy" id="1353009"/>
    <lineage>
        <taxon>Eukaryota</taxon>
        <taxon>Fungi</taxon>
        <taxon>Dikarya</taxon>
        <taxon>Basidiomycota</taxon>
        <taxon>Agaricomycotina</taxon>
        <taxon>Agaricomycetes</taxon>
        <taxon>Polyporales</taxon>
        <taxon>Polyporaceae</taxon>
        <taxon>Trametes</taxon>
    </lineage>
</organism>
<feature type="signal peptide" evidence="4">
    <location>
        <begin position="1"/>
        <end position="17"/>
    </location>
</feature>
<feature type="chain" id="PRO_5013208963" description="AA9 family lytic polysaccharide monooxygenase AA9-X282">
    <location>
        <begin position="18"/>
        <end position="275"/>
    </location>
</feature>
<feature type="region of interest" description="X282 extension" evidence="5">
    <location>
        <begin position="236"/>
        <end position="265"/>
    </location>
</feature>
<feature type="short sequence motif" description="9res motif" evidence="5">
    <location>
        <begin position="268"/>
        <end position="275"/>
    </location>
</feature>
<feature type="binding site" evidence="1">
    <location>
        <position position="18"/>
    </location>
    <ligand>
        <name>Cu(2+)</name>
        <dbReference type="ChEBI" id="CHEBI:29036"/>
        <note>catalytic</note>
    </ligand>
</feature>
<feature type="binding site" evidence="1">
    <location>
        <position position="96"/>
    </location>
    <ligand>
        <name>Cu(2+)</name>
        <dbReference type="ChEBI" id="CHEBI:29036"/>
        <note>catalytic</note>
    </ligand>
</feature>
<feature type="binding site" evidence="2">
    <location>
        <position position="171"/>
    </location>
    <ligand>
        <name>O2</name>
        <dbReference type="ChEBI" id="CHEBI:15379"/>
    </ligand>
</feature>
<feature type="binding site" evidence="2">
    <location>
        <position position="180"/>
    </location>
    <ligand>
        <name>O2</name>
        <dbReference type="ChEBI" id="CHEBI:15379"/>
    </ligand>
</feature>
<feature type="binding site" evidence="1">
    <location>
        <position position="182"/>
    </location>
    <ligand>
        <name>Cu(2+)</name>
        <dbReference type="ChEBI" id="CHEBI:29036"/>
        <note>catalytic</note>
    </ligand>
</feature>
<feature type="modified residue" description="Phosphothreonine" evidence="5">
    <location>
        <position position="20"/>
    </location>
</feature>
<feature type="modified residue" description="Phosphoserine" evidence="5">
    <location>
        <position position="43"/>
    </location>
</feature>
<feature type="modified residue" description="Phosphoserine" evidence="5">
    <location>
        <position position="49"/>
    </location>
</feature>
<feature type="modified residue" description="Phosphothreonine" evidence="5">
    <location>
        <position position="50"/>
    </location>
</feature>
<feature type="modified residue" description="Phosphoserine" evidence="5">
    <location>
        <position position="58"/>
    </location>
</feature>
<feature type="modified residue" description="Phosphoserine" evidence="5">
    <location>
        <position position="130"/>
    </location>
</feature>
<feature type="disulfide bond" evidence="1">
    <location>
        <begin position="66"/>
        <end position="185"/>
    </location>
</feature>
<feature type="mutagenesis site" description="Does not allow to restore any significant LPMO activity on cellulose." evidence="5">
    <original>T</original>
    <variation>V</variation>
    <location>
        <position position="20"/>
    </location>
</feature>
<comment type="function">
    <text evidence="5">Lytic polysaccharide monooxygenase (LPMO) that depolymerizes crystalline and amorphous polysaccharides via the oxidation of scissile alpha- or beta-(1-4)-glycosidic bonds, yielding C1 oxidation products (PubMed:37463979). Catalysis by LPMOs requires the reduction of the active-site copper from Cu(II) to Cu(I) by a reducing agent and H(2)O(2) or O(2) as a cosubstrate (PubMed:37463979). Shows only weak binding properties to cellulose, and low cellulolytic oxidative activity which questions the involvement of X282 extension-containing AA9 proteins in the degradation of plant cell wall and opens new avenues as to the divergence of function of some AA9 members (PubMed:37463979).</text>
</comment>
<comment type="catalytic activity">
    <reaction evidence="5">
        <text>[(1-&gt;4)-beta-D-glucosyl]n+m + reduced acceptor + O2 = 4-dehydro-beta-D-glucosyl-[(1-&gt;4)-beta-D-glucosyl]n-1 + [(1-&gt;4)-beta-D-glucosyl]m + acceptor + H2O.</text>
        <dbReference type="EC" id="1.14.99.56"/>
    </reaction>
</comment>
<comment type="cofactor">
    <cofactor evidence="3">
        <name>Cu(2+)</name>
        <dbReference type="ChEBI" id="CHEBI:29036"/>
    </cofactor>
    <text evidence="3">Binds 1 copper ion per subunit.</text>
</comment>
<comment type="subcellular location">
    <subcellularLocation>
        <location evidence="8">Secreted</location>
    </subcellularLocation>
</comment>
<comment type="domain">
    <text evidence="5">Has a modular structure: an endo-beta-1,4-glucanase catalytic module at the N-terminus, a C-terminal X282 extension, followed by a smal 9-residues (9res) motif (PubMed:37463979). The X282 extension is a highly conserved stretch of approximately 30 amino acids mostly made up of threonine/serine which could potentially serve as O-glycosylation or phosphorylation sites, while five conserved prolines could confer rigidity (PubMed:37463979). The 9 residues glycine-rich C-term extension could hold phosphate-binding properties (PubMed:37463979).</text>
</comment>
<comment type="similarity">
    <text evidence="7">Belongs to the polysaccharide monooxygenase AA9 family.</text>
</comment>
<protein>
    <recommendedName>
        <fullName evidence="6">AA9 family lytic polysaccharide monooxygenase AA9-X282</fullName>
        <ecNumber evidence="5">1.14.99.56</ecNumber>
    </recommendedName>
    <alternativeName>
        <fullName evidence="7">Cellulase AA9-X282</fullName>
    </alternativeName>
    <alternativeName>
        <fullName evidence="7">Endo-beta-1,4-glucanase AA9-X282</fullName>
        <shortName evidence="7">Endoglucanase AA9-X282</shortName>
    </alternativeName>
    <alternativeName>
        <fullName evidence="7">Glycosyl hydrolase 61 family protein AA9-X282</fullName>
    </alternativeName>
    <alternativeName>
        <fullName evidence="6">X282 extension-containing AA9 protein</fullName>
        <shortName evidence="6">AA9-X282</shortName>
    </alternativeName>
</protein>
<sequence>MFTKLIIAASLAASVAAHATFQELWINGVDQGSSCVRLPQSNSPVTSVSTPDLACNASPHPSDGICQVMPGDEVTVEMHQQPNDRSCATEAIGGDHYGPVLVYMAKVDDATTAVGSSAQWFKVAEIGLPSSNPDYWGTEVLNDNCGHYTFKVPSDIAPGNYLIRAEVIALHVASSIGGAQFYMSCYQVNVGGSGSANPPTVSIPGAYSATDPGILINIYEPLSTYTIPGPTPYATTSPAVANTPYPTTATWNTALQPSTVPTAVPTPGTPGIGKA</sequence>
<gene>
    <name evidence="6" type="primary">AA9-X282</name>
    <name type="ORF">PYCCODRAFT_1423642</name>
</gene>
<name>LP9_TRAC3</name>